<evidence type="ECO:0000250" key="1">
    <source>
        <dbReference type="UniProtKB" id="P13689"/>
    </source>
</evidence>
<evidence type="ECO:0000269" key="2">
    <source>
    </source>
</evidence>
<evidence type="ECO:0000269" key="3">
    <source>
    </source>
</evidence>
<evidence type="ECO:0000269" key="4">
    <source>
    </source>
</evidence>
<evidence type="ECO:0000269" key="5">
    <source>
    </source>
</evidence>
<evidence type="ECO:0000269" key="6">
    <source>
    </source>
</evidence>
<evidence type="ECO:0000269" key="7">
    <source>
    </source>
</evidence>
<evidence type="ECO:0000269" key="8">
    <source>
    </source>
</evidence>
<evidence type="ECO:0000269" key="9">
    <source>
    </source>
</evidence>
<evidence type="ECO:0000269" key="10">
    <source>
    </source>
</evidence>
<evidence type="ECO:0000269" key="11">
    <source>
    </source>
</evidence>
<evidence type="ECO:0000269" key="12">
    <source>
    </source>
</evidence>
<evidence type="ECO:0000269" key="13">
    <source>
    </source>
</evidence>
<evidence type="ECO:0000269" key="14">
    <source>
    </source>
</evidence>
<evidence type="ECO:0000269" key="15">
    <source>
    </source>
</evidence>
<evidence type="ECO:0000269" key="16">
    <source>
    </source>
</evidence>
<evidence type="ECO:0000269" key="17">
    <source>
    </source>
</evidence>
<evidence type="ECO:0000269" key="18">
    <source>
    </source>
</evidence>
<evidence type="ECO:0000269" key="19">
    <source>
    </source>
</evidence>
<evidence type="ECO:0000269" key="20">
    <source>
    </source>
</evidence>
<evidence type="ECO:0000303" key="21">
    <source>
    </source>
</evidence>
<evidence type="ECO:0000303" key="22">
    <source>
    </source>
</evidence>
<evidence type="ECO:0000305" key="23"/>
<evidence type="ECO:0000305" key="24">
    <source>
    </source>
</evidence>
<evidence type="ECO:0000312" key="25">
    <source>
        <dbReference type="Araport" id="AT4G02980"/>
    </source>
</evidence>
<evidence type="ECO:0000312" key="26">
    <source>
        <dbReference type="EMBL" id="AAC79108.1"/>
    </source>
</evidence>
<organism>
    <name type="scientific">Arabidopsis thaliana</name>
    <name type="common">Mouse-ear cress</name>
    <dbReference type="NCBI Taxonomy" id="3702"/>
    <lineage>
        <taxon>Eukaryota</taxon>
        <taxon>Viridiplantae</taxon>
        <taxon>Streptophyta</taxon>
        <taxon>Embryophyta</taxon>
        <taxon>Tracheophyta</taxon>
        <taxon>Spermatophyta</taxon>
        <taxon>Magnoliopsida</taxon>
        <taxon>eudicotyledons</taxon>
        <taxon>Gunneridae</taxon>
        <taxon>Pentapetalae</taxon>
        <taxon>rosids</taxon>
        <taxon>malvids</taxon>
        <taxon>Brassicales</taxon>
        <taxon>Brassicaceae</taxon>
        <taxon>Camelineae</taxon>
        <taxon>Arabidopsis</taxon>
    </lineage>
</organism>
<gene>
    <name evidence="22" type="primary">ERABP1</name>
    <name evidence="25" type="ordered locus">At4g02980</name>
    <name evidence="26" type="ORF">T4I9.14</name>
</gene>
<name>ABP1_ARATH</name>
<dbReference type="EMBL" id="X55111">
    <property type="protein sequence ID" value="CAA38909.1"/>
    <property type="molecule type" value="Genomic_DNA"/>
</dbReference>
<dbReference type="EMBL" id="X69901">
    <property type="protein sequence ID" value="CAA49526.1"/>
    <property type="molecule type" value="Genomic_DNA"/>
</dbReference>
<dbReference type="EMBL" id="S40550">
    <property type="protein sequence ID" value="AAB22612.1"/>
    <property type="molecule type" value="mRNA"/>
</dbReference>
<dbReference type="EMBL" id="AF069442">
    <property type="protein sequence ID" value="AAC79108.1"/>
    <property type="molecule type" value="Genomic_DNA"/>
</dbReference>
<dbReference type="EMBL" id="AL161495">
    <property type="protein sequence ID" value="CAB77783.1"/>
    <property type="molecule type" value="Genomic_DNA"/>
</dbReference>
<dbReference type="EMBL" id="CP002687">
    <property type="protein sequence ID" value="AEE82256.1"/>
    <property type="molecule type" value="Genomic_DNA"/>
</dbReference>
<dbReference type="EMBL" id="AF389278">
    <property type="protein sequence ID" value="AAK63851.1"/>
    <property type="molecule type" value="mRNA"/>
</dbReference>
<dbReference type="EMBL" id="AY093754">
    <property type="protein sequence ID" value="AAM10378.1"/>
    <property type="molecule type" value="mRNA"/>
</dbReference>
<dbReference type="EMBL" id="AY087315">
    <property type="protein sequence ID" value="AAM64865.1"/>
    <property type="molecule type" value="mRNA"/>
</dbReference>
<dbReference type="PIR" id="S31584">
    <property type="entry name" value="S31584"/>
</dbReference>
<dbReference type="SMR" id="P33487"/>
<dbReference type="BioGRID" id="13409">
    <property type="interactions" value="1"/>
</dbReference>
<dbReference type="DIP" id="DIP-61369N"/>
<dbReference type="FunCoup" id="P33487">
    <property type="interactions" value="722"/>
</dbReference>
<dbReference type="IntAct" id="P33487">
    <property type="interactions" value="1"/>
</dbReference>
<dbReference type="STRING" id="3702.P33487"/>
<dbReference type="TCDB" id="9.B.443.1.1">
    <property type="family name" value="the plant auxin binding protein receptor (p-abp-r) family"/>
</dbReference>
<dbReference type="GlyCosmos" id="P33487">
    <property type="glycosylation" value="1 site, No reported glycans"/>
</dbReference>
<dbReference type="GlyGen" id="P33487">
    <property type="glycosylation" value="1 site"/>
</dbReference>
<dbReference type="PaxDb" id="3702-AT4G02980.1"/>
<dbReference type="ProteomicsDB" id="244521"/>
<dbReference type="EnsemblPlants" id="AT4G02980.1">
    <property type="protein sequence ID" value="AT4G02980.1"/>
    <property type="gene ID" value="AT4G02980"/>
</dbReference>
<dbReference type="GeneID" id="828120"/>
<dbReference type="Gramene" id="AT4G02980.1">
    <property type="protein sequence ID" value="AT4G02980.1"/>
    <property type="gene ID" value="AT4G02980"/>
</dbReference>
<dbReference type="KEGG" id="ath:AT4G02980"/>
<dbReference type="Araport" id="AT4G02980"/>
<dbReference type="TAIR" id="AT4G02980">
    <property type="gene designation" value="ABP1"/>
</dbReference>
<dbReference type="eggNOG" id="ENOG502RXJU">
    <property type="taxonomic scope" value="Eukaryota"/>
</dbReference>
<dbReference type="HOGENOM" id="CLU_092214_1_0_1"/>
<dbReference type="InParanoid" id="P33487"/>
<dbReference type="OMA" id="VWNTNEN"/>
<dbReference type="PhylomeDB" id="P33487"/>
<dbReference type="PRO" id="PR:P33487"/>
<dbReference type="Proteomes" id="UP000006548">
    <property type="component" value="Chromosome 4"/>
</dbReference>
<dbReference type="ExpressionAtlas" id="P33487">
    <property type="expression patterns" value="baseline and differential"/>
</dbReference>
<dbReference type="GO" id="GO:0005788">
    <property type="term" value="C:endoplasmic reticulum lumen"/>
    <property type="evidence" value="ECO:0007669"/>
    <property type="project" value="UniProtKB-SubCell"/>
</dbReference>
<dbReference type="GO" id="GO:0005886">
    <property type="term" value="C:plasma membrane"/>
    <property type="evidence" value="ECO:0007669"/>
    <property type="project" value="UniProtKB-SubCell"/>
</dbReference>
<dbReference type="GO" id="GO:0010011">
    <property type="term" value="F:auxin binding"/>
    <property type="evidence" value="ECO:0000315"/>
    <property type="project" value="TAIR"/>
</dbReference>
<dbReference type="GO" id="GO:0008270">
    <property type="term" value="F:zinc ion binding"/>
    <property type="evidence" value="ECO:0000250"/>
    <property type="project" value="UniProtKB"/>
</dbReference>
<dbReference type="GO" id="GO:0000911">
    <property type="term" value="P:cytokinesis by cell plate formation"/>
    <property type="evidence" value="ECO:0000315"/>
    <property type="project" value="TAIR"/>
</dbReference>
<dbReference type="GO" id="GO:0051781">
    <property type="term" value="P:positive regulation of cell division"/>
    <property type="evidence" value="ECO:0000315"/>
    <property type="project" value="TAIR"/>
</dbReference>
<dbReference type="GO" id="GO:0045793">
    <property type="term" value="P:positive regulation of cell size"/>
    <property type="evidence" value="ECO:0000315"/>
    <property type="project" value="TAIR"/>
</dbReference>
<dbReference type="GO" id="GO:0032877">
    <property type="term" value="P:positive regulation of DNA endoreduplication"/>
    <property type="evidence" value="ECO:0000315"/>
    <property type="project" value="TAIR"/>
</dbReference>
<dbReference type="GO" id="GO:0010928">
    <property type="term" value="P:regulation of auxin mediated signaling pathway"/>
    <property type="evidence" value="ECO:0000315"/>
    <property type="project" value="UniProtKB"/>
</dbReference>
<dbReference type="GO" id="GO:0007165">
    <property type="term" value="P:signal transduction"/>
    <property type="evidence" value="ECO:0000315"/>
    <property type="project" value="UniProtKB"/>
</dbReference>
<dbReference type="GO" id="GO:0009826">
    <property type="term" value="P:unidimensional cell growth"/>
    <property type="evidence" value="ECO:0000315"/>
    <property type="project" value="TAIR"/>
</dbReference>
<dbReference type="CDD" id="cd02220">
    <property type="entry name" value="cupin_ABP1"/>
    <property type="match status" value="1"/>
</dbReference>
<dbReference type="FunFam" id="2.60.120.10:FF:000080">
    <property type="entry name" value="Auxin-binding protein 1"/>
    <property type="match status" value="1"/>
</dbReference>
<dbReference type="Gene3D" id="2.60.120.10">
    <property type="entry name" value="Jelly Rolls"/>
    <property type="match status" value="1"/>
</dbReference>
<dbReference type="InterPro" id="IPR000526">
    <property type="entry name" value="Auxin-bd"/>
</dbReference>
<dbReference type="InterPro" id="IPR014710">
    <property type="entry name" value="RmlC-like_jellyroll"/>
</dbReference>
<dbReference type="InterPro" id="IPR011051">
    <property type="entry name" value="RmlC_Cupin_sf"/>
</dbReference>
<dbReference type="PANTHER" id="PTHR37236">
    <property type="entry name" value="AUXIN-BINDING PROTEIN 1"/>
    <property type="match status" value="1"/>
</dbReference>
<dbReference type="PANTHER" id="PTHR37236:SF1">
    <property type="entry name" value="AUXIN-BINDING PROTEIN 1"/>
    <property type="match status" value="1"/>
</dbReference>
<dbReference type="Pfam" id="PF02041">
    <property type="entry name" value="Auxin_BP"/>
    <property type="match status" value="1"/>
</dbReference>
<dbReference type="PRINTS" id="PR00655">
    <property type="entry name" value="AUXINBINDNGP"/>
</dbReference>
<dbReference type="SUPFAM" id="SSF51182">
    <property type="entry name" value="RmlC-like cupins"/>
    <property type="match status" value="1"/>
</dbReference>
<dbReference type="PROSITE" id="PS00014">
    <property type="entry name" value="ER_TARGET"/>
    <property type="match status" value="1"/>
</dbReference>
<reference key="1">
    <citation type="journal article" date="1993" name="Plant Cell Physiol.">
        <title>Structure of the gene for an auxin-binding protein and a gene for 7SL RNA from Arabidopsis thaliana.</title>
        <authorList>
            <person name="Shimomura S."/>
            <person name="Liu W."/>
            <person name="Inohara N."/>
            <person name="Watanabe S."/>
            <person name="Futai M."/>
        </authorList>
    </citation>
    <scope>NUCLEOTIDE SEQUENCE [GENOMIC DNA]</scope>
    <source>
        <strain>cv. Columbia</strain>
    </source>
</reference>
<reference key="2">
    <citation type="journal article" date="1992" name="Plant Cell">
        <title>Molecular analysis of an auxin binding protein gene located on chromosome 4 of Arabidopsis.</title>
        <authorList>
            <person name="Palme K."/>
            <person name="Hesse T."/>
            <person name="Campos N."/>
            <person name="Garbers C."/>
            <person name="Yanofsky M.F."/>
            <person name="Schell J."/>
        </authorList>
    </citation>
    <scope>NUCLEOTIDE SEQUENCE [MRNA]</scope>
    <scope>PROTEIN SEQUENCE OF 34-68</scope>
</reference>
<reference key="3">
    <citation type="journal article" date="1999" name="Nature">
        <title>Sequence and analysis of chromosome 4 of the plant Arabidopsis thaliana.</title>
        <authorList>
            <person name="Mayer K.F.X."/>
            <person name="Schueller C."/>
            <person name="Wambutt R."/>
            <person name="Murphy G."/>
            <person name="Volckaert G."/>
            <person name="Pohl T."/>
            <person name="Duesterhoeft A."/>
            <person name="Stiekema W."/>
            <person name="Entian K.-D."/>
            <person name="Terryn N."/>
            <person name="Harris B."/>
            <person name="Ansorge W."/>
            <person name="Brandt P."/>
            <person name="Grivell L.A."/>
            <person name="Rieger M."/>
            <person name="Weichselgartner M."/>
            <person name="de Simone V."/>
            <person name="Obermaier B."/>
            <person name="Mache R."/>
            <person name="Mueller M."/>
            <person name="Kreis M."/>
            <person name="Delseny M."/>
            <person name="Puigdomenech P."/>
            <person name="Watson M."/>
            <person name="Schmidtheini T."/>
            <person name="Reichert B."/>
            <person name="Portetelle D."/>
            <person name="Perez-Alonso M."/>
            <person name="Boutry M."/>
            <person name="Bancroft I."/>
            <person name="Vos P."/>
            <person name="Hoheisel J."/>
            <person name="Zimmermann W."/>
            <person name="Wedler H."/>
            <person name="Ridley P."/>
            <person name="Langham S.-A."/>
            <person name="McCullagh B."/>
            <person name="Bilham L."/>
            <person name="Robben J."/>
            <person name="van der Schueren J."/>
            <person name="Grymonprez B."/>
            <person name="Chuang Y.-J."/>
            <person name="Vandenbussche F."/>
            <person name="Braeken M."/>
            <person name="Weltjens I."/>
            <person name="Voet M."/>
            <person name="Bastiaens I."/>
            <person name="Aert R."/>
            <person name="Defoor E."/>
            <person name="Weitzenegger T."/>
            <person name="Bothe G."/>
            <person name="Ramsperger U."/>
            <person name="Hilbert H."/>
            <person name="Braun M."/>
            <person name="Holzer E."/>
            <person name="Brandt A."/>
            <person name="Peters S."/>
            <person name="van Staveren M."/>
            <person name="Dirkse W."/>
            <person name="Mooijman P."/>
            <person name="Klein Lankhorst R."/>
            <person name="Rose M."/>
            <person name="Hauf J."/>
            <person name="Koetter P."/>
            <person name="Berneiser S."/>
            <person name="Hempel S."/>
            <person name="Feldpausch M."/>
            <person name="Lamberth S."/>
            <person name="Van den Daele H."/>
            <person name="De Keyser A."/>
            <person name="Buysshaert C."/>
            <person name="Gielen J."/>
            <person name="Villarroel R."/>
            <person name="De Clercq R."/>
            <person name="van Montagu M."/>
            <person name="Rogers J."/>
            <person name="Cronin A."/>
            <person name="Quail M.A."/>
            <person name="Bray-Allen S."/>
            <person name="Clark L."/>
            <person name="Doggett J."/>
            <person name="Hall S."/>
            <person name="Kay M."/>
            <person name="Lennard N."/>
            <person name="McLay K."/>
            <person name="Mayes R."/>
            <person name="Pettett A."/>
            <person name="Rajandream M.A."/>
            <person name="Lyne M."/>
            <person name="Benes V."/>
            <person name="Rechmann S."/>
            <person name="Borkova D."/>
            <person name="Bloecker H."/>
            <person name="Scharfe M."/>
            <person name="Grimm M."/>
            <person name="Loehnert T.-H."/>
            <person name="Dose S."/>
            <person name="de Haan M."/>
            <person name="Maarse A.C."/>
            <person name="Schaefer M."/>
            <person name="Mueller-Auer S."/>
            <person name="Gabel C."/>
            <person name="Fuchs M."/>
            <person name="Fartmann B."/>
            <person name="Granderath K."/>
            <person name="Dauner D."/>
            <person name="Herzl A."/>
            <person name="Neumann S."/>
            <person name="Argiriou A."/>
            <person name="Vitale D."/>
            <person name="Liguori R."/>
            <person name="Piravandi E."/>
            <person name="Massenet O."/>
            <person name="Quigley F."/>
            <person name="Clabauld G."/>
            <person name="Muendlein A."/>
            <person name="Felber R."/>
            <person name="Schnabl S."/>
            <person name="Hiller R."/>
            <person name="Schmidt W."/>
            <person name="Lecharny A."/>
            <person name="Aubourg S."/>
            <person name="Chefdor F."/>
            <person name="Cooke R."/>
            <person name="Berger C."/>
            <person name="Monfort A."/>
            <person name="Casacuberta E."/>
            <person name="Gibbons T."/>
            <person name="Weber N."/>
            <person name="Vandenbol M."/>
            <person name="Bargues M."/>
            <person name="Terol J."/>
            <person name="Torres A."/>
            <person name="Perez-Perez A."/>
            <person name="Purnelle B."/>
            <person name="Bent E."/>
            <person name="Johnson S."/>
            <person name="Tacon D."/>
            <person name="Jesse T."/>
            <person name="Heijnen L."/>
            <person name="Schwarz S."/>
            <person name="Scholler P."/>
            <person name="Heber S."/>
            <person name="Francs P."/>
            <person name="Bielke C."/>
            <person name="Frishman D."/>
            <person name="Haase D."/>
            <person name="Lemcke K."/>
            <person name="Mewes H.-W."/>
            <person name="Stocker S."/>
            <person name="Zaccaria P."/>
            <person name="Bevan M."/>
            <person name="Wilson R.K."/>
            <person name="de la Bastide M."/>
            <person name="Habermann K."/>
            <person name="Parnell L."/>
            <person name="Dedhia N."/>
            <person name="Gnoj L."/>
            <person name="Schutz K."/>
            <person name="Huang E."/>
            <person name="Spiegel L."/>
            <person name="Sekhon M."/>
            <person name="Murray J."/>
            <person name="Sheet P."/>
            <person name="Cordes M."/>
            <person name="Abu-Threideh J."/>
            <person name="Stoneking T."/>
            <person name="Kalicki J."/>
            <person name="Graves T."/>
            <person name="Harmon G."/>
            <person name="Edwards J."/>
            <person name="Latreille P."/>
            <person name="Courtney L."/>
            <person name="Cloud J."/>
            <person name="Abbott A."/>
            <person name="Scott K."/>
            <person name="Johnson D."/>
            <person name="Minx P."/>
            <person name="Bentley D."/>
            <person name="Fulton B."/>
            <person name="Miller N."/>
            <person name="Greco T."/>
            <person name="Kemp K."/>
            <person name="Kramer J."/>
            <person name="Fulton L."/>
            <person name="Mardis E."/>
            <person name="Dante M."/>
            <person name="Pepin K."/>
            <person name="Hillier L.W."/>
            <person name="Nelson J."/>
            <person name="Spieth J."/>
            <person name="Ryan E."/>
            <person name="Andrews S."/>
            <person name="Geisel C."/>
            <person name="Layman D."/>
            <person name="Du H."/>
            <person name="Ali J."/>
            <person name="Berghoff A."/>
            <person name="Jones K."/>
            <person name="Drone K."/>
            <person name="Cotton M."/>
            <person name="Joshu C."/>
            <person name="Antonoiu B."/>
            <person name="Zidanic M."/>
            <person name="Strong C."/>
            <person name="Sun H."/>
            <person name="Lamar B."/>
            <person name="Yordan C."/>
            <person name="Ma P."/>
            <person name="Zhong J."/>
            <person name="Preston R."/>
            <person name="Vil D."/>
            <person name="Shekher M."/>
            <person name="Matero A."/>
            <person name="Shah R."/>
            <person name="Swaby I.K."/>
            <person name="O'Shaughnessy A."/>
            <person name="Rodriguez M."/>
            <person name="Hoffman J."/>
            <person name="Till S."/>
            <person name="Granat S."/>
            <person name="Shohdy N."/>
            <person name="Hasegawa A."/>
            <person name="Hameed A."/>
            <person name="Lodhi M."/>
            <person name="Johnson A."/>
            <person name="Chen E."/>
            <person name="Marra M.A."/>
            <person name="Martienssen R."/>
            <person name="McCombie W.R."/>
        </authorList>
    </citation>
    <scope>NUCLEOTIDE SEQUENCE [LARGE SCALE GENOMIC DNA]</scope>
    <source>
        <strain>cv. Columbia</strain>
    </source>
</reference>
<reference key="4">
    <citation type="journal article" date="2017" name="Plant J.">
        <title>Araport11: a complete reannotation of the Arabidopsis thaliana reference genome.</title>
        <authorList>
            <person name="Cheng C.Y."/>
            <person name="Krishnakumar V."/>
            <person name="Chan A.P."/>
            <person name="Thibaud-Nissen F."/>
            <person name="Schobel S."/>
            <person name="Town C.D."/>
        </authorList>
    </citation>
    <scope>GENOME REANNOTATION</scope>
    <source>
        <strain>cv. Columbia</strain>
    </source>
</reference>
<reference key="5">
    <citation type="journal article" date="2003" name="Science">
        <title>Empirical analysis of transcriptional activity in the Arabidopsis genome.</title>
        <authorList>
            <person name="Yamada K."/>
            <person name="Lim J."/>
            <person name="Dale J.M."/>
            <person name="Chen H."/>
            <person name="Shinn P."/>
            <person name="Palm C.J."/>
            <person name="Southwick A.M."/>
            <person name="Wu H.C."/>
            <person name="Kim C.J."/>
            <person name="Nguyen M."/>
            <person name="Pham P.K."/>
            <person name="Cheuk R.F."/>
            <person name="Karlin-Newmann G."/>
            <person name="Liu S.X."/>
            <person name="Lam B."/>
            <person name="Sakano H."/>
            <person name="Wu T."/>
            <person name="Yu G."/>
            <person name="Miranda M."/>
            <person name="Quach H.L."/>
            <person name="Tripp M."/>
            <person name="Chang C.H."/>
            <person name="Lee J.M."/>
            <person name="Toriumi M.J."/>
            <person name="Chan M.M."/>
            <person name="Tang C.C."/>
            <person name="Onodera C.S."/>
            <person name="Deng J.M."/>
            <person name="Akiyama K."/>
            <person name="Ansari Y."/>
            <person name="Arakawa T."/>
            <person name="Banh J."/>
            <person name="Banno F."/>
            <person name="Bowser L."/>
            <person name="Brooks S.Y."/>
            <person name="Carninci P."/>
            <person name="Chao Q."/>
            <person name="Choy N."/>
            <person name="Enju A."/>
            <person name="Goldsmith A.D."/>
            <person name="Gurjal M."/>
            <person name="Hansen N.F."/>
            <person name="Hayashizaki Y."/>
            <person name="Johnson-Hopson C."/>
            <person name="Hsuan V.W."/>
            <person name="Iida K."/>
            <person name="Karnes M."/>
            <person name="Khan S."/>
            <person name="Koesema E."/>
            <person name="Ishida J."/>
            <person name="Jiang P.X."/>
            <person name="Jones T."/>
            <person name="Kawai J."/>
            <person name="Kamiya A."/>
            <person name="Meyers C."/>
            <person name="Nakajima M."/>
            <person name="Narusaka M."/>
            <person name="Seki M."/>
            <person name="Sakurai T."/>
            <person name="Satou M."/>
            <person name="Tamse R."/>
            <person name="Vaysberg M."/>
            <person name="Wallender E.K."/>
            <person name="Wong C."/>
            <person name="Yamamura Y."/>
            <person name="Yuan S."/>
            <person name="Shinozaki K."/>
            <person name="Davis R.W."/>
            <person name="Theologis A."/>
            <person name="Ecker J.R."/>
        </authorList>
    </citation>
    <scope>NUCLEOTIDE SEQUENCE [LARGE SCALE MRNA]</scope>
    <source>
        <strain>cv. Columbia</strain>
    </source>
</reference>
<reference key="6">
    <citation type="submission" date="2002-03" db="EMBL/GenBank/DDBJ databases">
        <title>Full-length cDNA from Arabidopsis thaliana.</title>
        <authorList>
            <person name="Brover V.V."/>
            <person name="Troukhan M.E."/>
            <person name="Alexandrov N.A."/>
            <person name="Lu Y.-P."/>
            <person name="Flavell R.B."/>
            <person name="Feldmann K.A."/>
        </authorList>
    </citation>
    <scope>NUCLEOTIDE SEQUENCE [LARGE SCALE MRNA]</scope>
</reference>
<reference key="7">
    <citation type="journal article" date="1998" name="Science">
        <title>Auxin-dependent cell expansion mediated by overexpressed auxin-binding protein 1.</title>
        <authorList>
            <person name="Jones A.M."/>
            <person name="Im K.H."/>
            <person name="Savka M.A."/>
            <person name="Wu M.J."/>
            <person name="DeWitt N.G."/>
            <person name="Shillito R."/>
            <person name="Binns A.N."/>
        </authorList>
    </citation>
    <scope>FUNCTION</scope>
</reference>
<reference key="8">
    <citation type="journal article" date="2001" name="Genes Dev.">
        <title>ABP1 is required for organized cell elongation and division in Arabidopsis embryogenesis.</title>
        <authorList>
            <person name="Chen J.G."/>
            <person name="Ullah H."/>
            <person name="Young J.C."/>
            <person name="Sussman M.R."/>
            <person name="Jones A.M."/>
        </authorList>
    </citation>
    <scope>FUNCTION</scope>
    <scope>DISRUPTION PHENOTYPE</scope>
</reference>
<reference key="9">
    <citation type="journal article" date="2006" name="Plant Mol. Biol.">
        <title>Identification of a glycosylphosphatidylinositol-anchored plasma membrane protein interacting with the C-terminus of auxin-binding protein 1: a photoaffinity crosslinking study.</title>
        <authorList>
            <person name="Shimomura S."/>
        </authorList>
    </citation>
    <scope>SUBCELLULAR LOCATION</scope>
    <scope>INTERACTION WITH SKU5</scope>
</reference>
<reference key="10">
    <citation type="journal article" date="2008" name="Plant Cell">
        <title>Conditional repression of AUXIN BINDING PROTEIN1 reveals that it coordinates cell division and cell expansion during postembryonic shoot development in Arabidopsis and tobacco.</title>
        <authorList>
            <person name="Braun N."/>
            <person name="Wyrzykowska J."/>
            <person name="Muller P."/>
            <person name="David K."/>
            <person name="Couch D."/>
            <person name="Perrot-Rechenmann C."/>
            <person name="Fleming A.J."/>
        </authorList>
    </citation>
    <scope>FUNCTION</scope>
</reference>
<reference key="11">
    <citation type="journal article" date="2009" name="PLoS ONE">
        <title>The AUXIN BINDING PROTEIN 1 is required for differential auxin responses mediating root growth.</title>
        <authorList>
            <person name="Tromas A."/>
            <person name="Braun N."/>
            <person name="Muller P."/>
            <person name="Khodus T."/>
            <person name="Paponov I.A."/>
            <person name="Palme K."/>
            <person name="Ljung K."/>
            <person name="Lee J.Y."/>
            <person name="Benfey P."/>
            <person name="Murray J.A."/>
            <person name="Scheres B."/>
            <person name="Perrot-Rechenmann C."/>
        </authorList>
    </citation>
    <scope>FUNCTION</scope>
</reference>
<reference key="12">
    <citation type="journal article" date="2010" name="Biochem. Biophys. Res. Commun.">
        <title>In vitro and in vivo interaction of AtRma2 E3 ubiquitin ligase and auxin-binding protein 1.</title>
        <authorList>
            <person name="Son O."/>
            <person name="Cho S.K."/>
            <person name="Kim S.J."/>
            <person name="Kim W.T."/>
        </authorList>
    </citation>
    <scope>UBIQUITINATION BY RMA2</scope>
</reference>
<reference key="13">
    <citation type="journal article" date="2010" name="Cell">
        <title>Cell surface- and rho GTPase-based auxin signaling controls cellular interdigitation in Arabidopsis.</title>
        <authorList>
            <person name="Xu T."/>
            <person name="Wen M."/>
            <person name="Nagawa S."/>
            <person name="Fu Y."/>
            <person name="Chen J.G."/>
            <person name="Wu M.J."/>
            <person name="Perrot-Rechenmann C."/>
            <person name="Friml J."/>
            <person name="Jones A.M."/>
            <person name="Yang Z."/>
        </authorList>
    </citation>
    <scope>FUNCTION</scope>
    <scope>MUTAGENESIS OF HIS-92</scope>
</reference>
<reference key="14">
    <citation type="journal article" date="2010" name="Cell">
        <title>ABP1 mediates auxin inhibition of clathrin-dependent endocytosis in Arabidopsis.</title>
        <authorList>
            <person name="Robert S."/>
            <person name="Kleine-Vehn J."/>
            <person name="Barbez E."/>
            <person name="Sauer M."/>
            <person name="Paciorek T."/>
            <person name="Baster P."/>
            <person name="Vanneste S."/>
            <person name="Zhang J."/>
            <person name="Simon S."/>
            <person name="Covanova M."/>
            <person name="Hayashi K."/>
            <person name="Dhonukshe P."/>
            <person name="Yang Z."/>
            <person name="Bednarek S.Y."/>
            <person name="Jones A.M."/>
            <person name="Luschnig C."/>
            <person name="Aniento F."/>
            <person name="Zazimalova E."/>
            <person name="Friml J."/>
        </authorList>
    </citation>
    <scope>FUNCTION</scope>
</reference>
<reference key="15">
    <citation type="journal article" date="2011" name="Plant J.">
        <title>The heterozygous abp1/ABP1 insertional mutant has defects in functions requiring polar auxin transport and in regulation of early auxin-regulated genes.</title>
        <authorList>
            <person name="Effendi Y."/>
            <person name="Rietz S."/>
            <person name="Fischer U."/>
            <person name="Scherer G.F."/>
        </authorList>
    </citation>
    <scope>FUNCTION</scope>
    <scope>INDUCTION BY AUXIN</scope>
</reference>
<reference key="16">
    <citation type="journal article" date="2011" name="Plant Signal. Behav.">
        <title>Auxin binding-protein1 (ABP1), a receptor to regulate auxin transport and early auxin genes in an interlocking system with PIN proteins and the receptor TIR1.</title>
        <authorList>
            <person name="Effendi Y."/>
            <person name="Scherer G.F."/>
        </authorList>
    </citation>
    <scope>REVIEW</scope>
</reference>
<reference key="17">
    <citation type="journal article" date="2012" name="Curr. Biol.">
        <title>ABP1 and ROP6 GTPase signaling regulate clathrin-mediated endocytosis in Arabidopsis roots.</title>
        <authorList>
            <person name="Chen X."/>
            <person name="Naramoto S."/>
            <person name="Robert S."/>
            <person name="Tejos R."/>
            <person name="Loefke C."/>
            <person name="Lin D."/>
            <person name="Yang Z."/>
            <person name="Friml J."/>
        </authorList>
    </citation>
    <scope>FUNCTION</scope>
</reference>
<reference key="18">
    <citation type="journal article" date="2013" name="J. Exp. Bot.">
        <title>AUXIN-BINDING-PROTEIN1 (ABP1) in phytochrome-B-controlled responses.</title>
        <authorList>
            <person name="Effendi Y."/>
            <person name="Jones A.M."/>
            <person name="Scherer G.F."/>
        </authorList>
    </citation>
    <scope>FUNCTION</scope>
</reference>
<reference key="19">
    <citation type="journal article" date="2013" name="Nat. Commun.">
        <title>Auxin-binding protein 1 is a negative regulator of the SCF(TIR1/AFB) pathway.</title>
        <authorList>
            <person name="Tromas A."/>
            <person name="Paque S."/>
            <person name="Stierle V."/>
            <person name="Quettier A.L."/>
            <person name="Muller P."/>
            <person name="Lechner E."/>
            <person name="Genschik P."/>
            <person name="Perrot-Rechenmann C."/>
        </authorList>
    </citation>
    <scope>FUNCTION</scope>
</reference>
<reference key="20">
    <citation type="journal article" date="2014" name="Nature">
        <title>Inhibition of cell expansion by rapid ABP1-mediated auxin effect on microtubules.</title>
        <authorList>
            <person name="Chen X."/>
            <person name="Grandont L."/>
            <person name="Li H."/>
            <person name="Hauschild R."/>
            <person name="Paque S."/>
            <person name="Abuzeineh A."/>
            <person name="Rakusova H."/>
            <person name="Benkova E."/>
            <person name="Perrot-Rechenmann C."/>
            <person name="Friml J."/>
        </authorList>
    </citation>
    <scope>FUNCTION</scope>
</reference>
<reference key="21">
    <citation type="journal article" date="2014" name="Plant Cell">
        <title>AUXIN BINDING PROTEIN1 links cell wall remodeling, auxin signaling, and cell expansion in arabidopsis.</title>
        <authorList>
            <person name="Paque S."/>
            <person name="Mouille G."/>
            <person name="Grandont L."/>
            <person name="Alabadi D."/>
            <person name="Gaertner C."/>
            <person name="Goyallon A."/>
            <person name="Muller P."/>
            <person name="Primard-Brisset C."/>
            <person name="Sormani R."/>
            <person name="Blazquez M.A."/>
            <person name="Perrot-Rechenmann C."/>
        </authorList>
    </citation>
    <scope>FUNCTION</scope>
</reference>
<reference key="22">
    <citation type="journal article" date="2014" name="Science">
        <title>Cell surface ABP1-TMK auxin-sensing complex activates ROP GTPase signaling.</title>
        <authorList>
            <person name="Xu T."/>
            <person name="Dai N."/>
            <person name="Chen J."/>
            <person name="Nagawa S."/>
            <person name="Cao M."/>
            <person name="Li H."/>
            <person name="Zhou Z."/>
            <person name="Chen X."/>
            <person name="De Rycke R."/>
            <person name="Rakusova H."/>
            <person name="Wang W."/>
            <person name="Jones A.M."/>
            <person name="Friml J."/>
            <person name="Patterson S.E."/>
            <person name="Bleecker A.B."/>
            <person name="Yang Z."/>
        </authorList>
    </citation>
    <scope>FUNCTION</scope>
    <scope>SUBCELLULAR LOCATION</scope>
    <scope>INTERACTION WITH TMK1</scope>
    <scope>MUTAGENESIS OF HIS-92</scope>
</reference>
<reference key="23">
    <citation type="journal article" date="2015" name="J. Exp. Bot.">
        <title>Complementation of the embryo-lethal T-DNA insertion mutant of AUXIN-BINDING-PROTEIN 1 (ABP1) with abp1 point mutated versions reveals crosstalk of ABP1 and phytochromes.</title>
        <authorList>
            <person name="Effendi Y."/>
            <person name="Ferro N."/>
            <person name="Labusch C."/>
            <person name="Geisler M."/>
            <person name="Scherer G.F."/>
        </authorList>
    </citation>
    <scope>FUNCTION</scope>
    <scope>MUTAGENESIS OF LEU-60; THR-89 AND HIS-141</scope>
    <source>
        <strain>cv. Wassilewskija</strain>
    </source>
</reference>
<reference key="24">
    <citation type="journal article" date="2015" name="Proc. Natl. Acad. Sci. U.S.A.">
        <title>Auxin binding protein 1 (ABP1) is not required for either auxin signaling or Arabidopsis development.</title>
        <authorList>
            <person name="Gao Y."/>
            <person name="Zhang Y."/>
            <person name="Zhang D."/>
            <person name="Dai X."/>
            <person name="Estelle M."/>
            <person name="Zhao Y."/>
        </authorList>
    </citation>
    <scope>DISRUPTION PHENOTYPE</scope>
</reference>
<reference key="25">
    <citation type="journal article" date="2015" name="J. Cell Sci.">
        <title>Auxin transporters and binding proteins at a glance.</title>
        <authorList>
            <person name="Grones P."/>
            <person name="Friml J."/>
        </authorList>
    </citation>
    <scope>REVIEW</scope>
</reference>
<reference key="26">
    <citation type="journal article" date="2015" name="J. Exp. Bot.">
        <title>Auxin-binding pocket of ABP1 is crucial for its gain-of-function cellular and developmental roles.</title>
        <authorList>
            <person name="Grones P."/>
            <person name="Chen X."/>
            <person name="Simon S."/>
            <person name="Kaufmann W.A."/>
            <person name="De Rycke R."/>
            <person name="Nodzynski T."/>
            <person name="Zazimalova E."/>
            <person name="Friml J."/>
        </authorList>
    </citation>
    <scope>FUNCTION</scope>
    <scope>MUTAGENESIS OF ARG-57; LEU-60; GLN-81; THR-89; PRO-90; HIS-92; HIS-94; VAL-99; PHE-125; PRO-136; PHE-181; TRP-185 AND GLN-188</scope>
    <source>
        <strain>cv. Columbia</strain>
    </source>
</reference>
<reference key="27">
    <citation type="journal article" date="2024" name="Cell">
        <title>RAF-like protein kinases mediate a deeply conserved, rapid auxin response.</title>
        <authorList>
            <person name="Kuhn A."/>
            <person name="Roosjen M."/>
            <person name="Mutte S."/>
            <person name="Dubey S.M."/>
            <person name="Carrillo Carrasco V.P."/>
            <person name="Boeren S."/>
            <person name="Monzer A."/>
            <person name="Koehorst J."/>
            <person name="Kohchi T."/>
            <person name="Nishihama R."/>
            <person name="Fendrych M."/>
            <person name="Sprakel J."/>
            <person name="Friml J."/>
            <person name="Weijers D."/>
        </authorList>
    </citation>
    <scope>FUNCTION</scope>
    <scope>DISRUPTION PHENOTYPE</scope>
    <source>
        <strain>cv. Columbia</strain>
        <tissue>Root</tissue>
    </source>
</reference>
<proteinExistence type="evidence at protein level"/>
<keyword id="KW-0927">Auxin signaling pathway</keyword>
<keyword id="KW-1003">Cell membrane</keyword>
<keyword id="KW-0903">Direct protein sequencing</keyword>
<keyword id="KW-1015">Disulfide bond</keyword>
<keyword id="KW-0256">Endoplasmic reticulum</keyword>
<keyword id="KW-0325">Glycoprotein</keyword>
<keyword id="KW-0472">Membrane</keyword>
<keyword id="KW-0479">Metal-binding</keyword>
<keyword id="KW-0675">Receptor</keyword>
<keyword id="KW-1185">Reference proteome</keyword>
<keyword id="KW-0732">Signal</keyword>
<keyword id="KW-0832">Ubl conjugation</keyword>
<keyword id="KW-0862">Zinc</keyword>
<accession>P33487</accession>
<accession>Q8LBB3</accession>
<sequence length="198" mass="22044">MIVLSVGSASSSPIVVVFSVALLLFYFSETSLGAPCPINGLPIVRNISDLPQDNYGRPGLSHMTVAGSVLHGMKEVEIWLQTFAPGSETPIHRHSCEEVFVVLKGSGTLYLAETHGNFPGKPIEFPIFANSTIHIPINDAHQVKNTGHEDLQVLVIISRPPIKIFIYEDWFMPHTAARLKFPYYWDEQCIQESQKDEL</sequence>
<feature type="signal peptide" evidence="3">
    <location>
        <begin position="1"/>
        <end position="33"/>
    </location>
</feature>
<feature type="chain" id="PRO_0000020613" description="Auxin-binding protein 1">
    <location>
        <begin position="34"/>
        <end position="198"/>
    </location>
</feature>
<feature type="short sequence motif" description="Prevents secretion from ER">
    <location>
        <begin position="195"/>
        <end position="198"/>
    </location>
</feature>
<feature type="binding site" evidence="1">
    <location>
        <position position="92"/>
    </location>
    <ligand>
        <name>Zn(2+)</name>
        <dbReference type="ChEBI" id="CHEBI:29105"/>
    </ligand>
</feature>
<feature type="binding site" evidence="1">
    <location>
        <position position="94"/>
    </location>
    <ligand>
        <name>Zn(2+)</name>
        <dbReference type="ChEBI" id="CHEBI:29105"/>
    </ligand>
</feature>
<feature type="binding site" evidence="1">
    <location>
        <position position="98"/>
    </location>
    <ligand>
        <name>Zn(2+)</name>
        <dbReference type="ChEBI" id="CHEBI:29105"/>
    </ligand>
</feature>
<feature type="binding site" evidence="1">
    <location>
        <position position="141"/>
    </location>
    <ligand>
        <name>Zn(2+)</name>
        <dbReference type="ChEBI" id="CHEBI:29105"/>
    </ligand>
</feature>
<feature type="glycosylation site" description="N-linked (GlcNAc...) asparagine" evidence="1">
    <location>
        <position position="130"/>
    </location>
</feature>
<feature type="disulfide bond" evidence="1">
    <location>
        <begin position="36"/>
        <end position="189"/>
    </location>
</feature>
<feature type="mutagenesis site" description="Slight reduction of activation by auxin. Slight reduction of activation by auxin; when associated with V-60." evidence="18">
    <original>R</original>
    <variation>K</variation>
    <location>
        <position position="57"/>
    </location>
</feature>
<feature type="mutagenesis site" description="Slight reduction of activation by auxin. Slight reduction of activation by auxin; when associated with K-57." evidence="18">
    <original>L</original>
    <variation>V</variation>
    <location>
        <position position="60"/>
    </location>
</feature>
<feature type="mutagenesis site" description="In abp1-9; lower auxin sensitivity and altered responses to continuous light and shade." evidence="15">
    <original>L</original>
    <variation>Y</variation>
    <location>
        <position position="60"/>
    </location>
</feature>
<feature type="mutagenesis site" description="Slight reduction of activation by auxin." evidence="18">
    <original>Q</original>
    <variation>D</variation>
    <location>
        <position position="81"/>
    </location>
</feature>
<feature type="mutagenesis site" description="In abp1-8; lower auxin sensitivity and altered responses to continuous light and shade." evidence="15">
    <original>T</original>
    <variation>I</variation>
    <location>
        <position position="89"/>
    </location>
</feature>
<feature type="mutagenesis site" description="Slight reduction of activation by auxin. Slight reduction of activation by auxin; when associated with L-90." evidence="18">
    <original>T</original>
    <variation>V</variation>
    <location>
        <position position="89"/>
    </location>
</feature>
<feature type="mutagenesis site" description="Slight reduction of activation by auxin. Slight reduction of activation by auxin; when associated with V-89." evidence="18">
    <original>P</original>
    <variation>L</variation>
    <location>
        <position position="90"/>
    </location>
</feature>
<feature type="mutagenesis site" description="In ABP-M1X; Strong reduction of activation by auxin. In ABP-M2X; strong reduction of activation by auxin; when associated with A-94." evidence="18">
    <original>H</original>
    <variation>A</variation>
    <location>
        <position position="92"/>
    </location>
</feature>
<feature type="mutagenesis site" description="In abp1-5; defects in pavement cells interdigitation and decreased interaction with TMK1." evidence="7 14">
    <original>H</original>
    <variation>Y</variation>
    <location>
        <position position="92"/>
    </location>
</feature>
<feature type="mutagenesis site" description="In ABP-M2X; strong reduction of activation by auxin; when associated with A-92." evidence="18">
    <original>H</original>
    <variation>A</variation>
    <location>
        <position position="94"/>
    </location>
</feature>
<feature type="mutagenesis site" description="No effect on activation by auxin." evidence="18">
    <original>V</original>
    <variation>A</variation>
    <location>
        <position position="99"/>
    </location>
</feature>
<feature type="mutagenesis site" description="No effect on activation by auxin." evidence="18">
    <original>F</original>
    <variation>L</variation>
    <location>
        <position position="125"/>
    </location>
</feature>
<feature type="mutagenesis site" description="No effect on activation by auxin." evidence="18">
    <original>P</original>
    <variation>L</variation>
    <location>
        <position position="136"/>
    </location>
</feature>
<feature type="mutagenesis site" description="In abp1-10; lower auxin sensitivity and altered responses to continuous light and shade." evidence="15">
    <original>H</original>
    <variation>N</variation>
    <location>
        <position position="141"/>
    </location>
</feature>
<feature type="mutagenesis site" description="Slight reduction of activation by auxin. Slight reduction of activation by auxin; when associated with Y-185." evidence="18">
    <original>F</original>
    <variation>L</variation>
    <location>
        <position position="181"/>
    </location>
</feature>
<feature type="mutagenesis site" description="Slight reduction of activation by auxin. Slight reduction of activation by auxin; when associated with L-181." evidence="18">
    <original>W</original>
    <variation>Y</variation>
    <location>
        <position position="185"/>
    </location>
</feature>
<feature type="mutagenesis site" description="No effect on activation by auxin." evidence="18">
    <original>Q</original>
    <variation>D</variation>
    <location>
        <position position="188"/>
    </location>
</feature>
<feature type="sequence conflict" description="In Ref. 6; AAM64865." evidence="23" ref="6">
    <original>V</original>
    <variation>L</variation>
    <location>
        <position position="102"/>
    </location>
</feature>
<protein>
    <recommendedName>
        <fullName evidence="22">Auxin-binding protein 1</fullName>
        <shortName evidence="22">ABP1</shortName>
    </recommendedName>
</protein>
<comment type="function">
    <text evidence="2 4 5 7 8 9 10 11 12 13 14 15 16 18 19 20">Auxin receptor that controls cell elongation and cell division (PubMed:11297513, PubMed:9804548). Involved in embryonic morphogenesis (PubMed:11297513). Acts on the cell cycle, endocycle, cell plate formation, and cell expansion and contributes to the control of auxin-related gene expression (PubMed:18952781). Controls root meristem size and mediates auxin responsiveness (PubMed:19777056). Involved in activation of ROP GTPases in response to auxin and regulation of clathrin-mediated endocytosis in roots (PubMed:20887895, PubMed:22683261). Acts as a positive factor in clathrin recruitment to the plasma membrane, thereby promoting endocytosis (PubMed:20887896, PubMed:25922490). Upon auxin binding, restricts the internalization of PIN proteins by inhibiting clathrin-mediated endocytosis (PubMed:20887896, PubMed:25922490). Promotes auxin-triggered phosphorylation status modulation of RAF-like kinases (e.g. RAF20 and RAF24) (PubMed:38128538). Involved in the regulation of polar auxin transport (PubMed:21223392). Behaves as a negative regulator of the SCF(TIR1/AFB) signaling pathway, protecting AUX/IAA repressors from degradation (PubMed:24051655). Regulates the expression of cell wall remodeling genes via an SCF(TIR1/AFB)-dependent pathway (PubMed:24424095). Involved in the modulation of hemicellulose xyloglucan structure (PubMed:24424095). Required for rapid auxin-mediated re-orientation of microtubules to regulate cell elongation in roots and dark-grown hypocotyls as well as asymmetric growth during gravitropic responses (PubMed:25409144). Involved in the shade avoidance response (PubMed:24052532). Forms with TMK1 a cell surface auxin perception complex that activates ROP signaling pathways (PubMed:24578577). ABP1 sensing of auxin is important for the ABP1-TMK1 complex formation (PubMed:24578577). Interacts functionally with phytochrome to regulate growth (PubMed:25392478).</text>
</comment>
<comment type="subunit">
    <text evidence="1 14 21">Homodimer (By similarity). May interact with the GPI-anchored plasma membrane protein SKU5 and its family members (PubMed:16649105). Interacts with TMK1 (via extracellular domain) (PubMed:24578577).</text>
</comment>
<comment type="interaction">
    <interactant intactId="EBI-16094614">
        <id>P33487</id>
    </interactant>
    <interactant intactId="EBI-2023970">
        <id>P43298</id>
        <label>TMK1</label>
    </interactant>
    <organismsDiffer>false</organismsDiffer>
    <experiments>3</experiments>
</comment>
<comment type="subcellular location">
    <subcellularLocation>
        <location evidence="14 24">Endoplasmic reticulum lumen</location>
    </subcellularLocation>
    <subcellularLocation>
        <location evidence="14 21">Cell membrane</location>
        <topology evidence="21">Peripheral membrane protein</topology>
    </subcellularLocation>
    <text evidence="14">In plasmolyzed cells, observed in strands connecting the apoplast and the plasma membrane.</text>
</comment>
<comment type="induction">
    <text evidence="9">Up-regulated by auxin.</text>
</comment>
<comment type="PTM">
    <text evidence="1">Glycosylated.</text>
</comment>
<comment type="PTM">
    <text evidence="6">Ubiquitinated by RMA2, leading to proteasomal degradation.</text>
</comment>
<comment type="disruption phenotype">
    <text evidence="2 17 19">Embryo lethality, when homozygous (PubMed:11297513). No visible phenotype was found for other null mutants (PubMed:25646447). Reduced auxin-triggered phosphorylation status modulation of RAF-like kinases (e.g. RAF20 and RAF24) (PubMed:38128538).</text>
</comment>
<comment type="caution">
    <text evidence="17">Analysis of new null mutants leads to the conclusion that plants do not need ABP1 for auxin signaling and for their growth and development under normal growth conditions.</text>
</comment>